<reference key="1">
    <citation type="submission" date="2003-03" db="EMBL/GenBank/DDBJ databases">
        <title>The complete genome sequence of Neisseria gonorrhoeae.</title>
        <authorList>
            <person name="Lewis L.A."/>
            <person name="Gillaspy A.F."/>
            <person name="McLaughlin R.E."/>
            <person name="Gipson M."/>
            <person name="Ducey T.F."/>
            <person name="Ownbey T."/>
            <person name="Hartman K."/>
            <person name="Nydick C."/>
            <person name="Carson M.B."/>
            <person name="Vaughn J."/>
            <person name="Thomson C."/>
            <person name="Song L."/>
            <person name="Lin S."/>
            <person name="Yuan X."/>
            <person name="Najar F."/>
            <person name="Zhan M."/>
            <person name="Ren Q."/>
            <person name="Zhu H."/>
            <person name="Qi S."/>
            <person name="Kenton S.M."/>
            <person name="Lai H."/>
            <person name="White J.D."/>
            <person name="Clifton S."/>
            <person name="Roe B.A."/>
            <person name="Dyer D.W."/>
        </authorList>
    </citation>
    <scope>NUCLEOTIDE SEQUENCE [LARGE SCALE GENOMIC DNA]</scope>
    <source>
        <strain>ATCC 700825 / FA 1090</strain>
    </source>
</reference>
<dbReference type="EC" id="2.8.1.8" evidence="1"/>
<dbReference type="EMBL" id="AE004969">
    <property type="protein sequence ID" value="AAW89507.1"/>
    <property type="molecule type" value="Genomic_DNA"/>
</dbReference>
<dbReference type="RefSeq" id="WP_003688622.1">
    <property type="nucleotide sequence ID" value="NC_002946.2"/>
</dbReference>
<dbReference type="RefSeq" id="YP_207919.1">
    <property type="nucleotide sequence ID" value="NC_002946.2"/>
</dbReference>
<dbReference type="SMR" id="Q5F8I0"/>
<dbReference type="STRING" id="242231.NGO_0793"/>
<dbReference type="GeneID" id="66753131"/>
<dbReference type="KEGG" id="ngo:NGO_0793"/>
<dbReference type="PATRIC" id="fig|242231.10.peg.939"/>
<dbReference type="HOGENOM" id="CLU_033144_2_1_4"/>
<dbReference type="UniPathway" id="UPA00538">
    <property type="reaction ID" value="UER00593"/>
</dbReference>
<dbReference type="Proteomes" id="UP000000535">
    <property type="component" value="Chromosome"/>
</dbReference>
<dbReference type="GO" id="GO:0005737">
    <property type="term" value="C:cytoplasm"/>
    <property type="evidence" value="ECO:0007669"/>
    <property type="project" value="UniProtKB-SubCell"/>
</dbReference>
<dbReference type="GO" id="GO:0051539">
    <property type="term" value="F:4 iron, 4 sulfur cluster binding"/>
    <property type="evidence" value="ECO:0007669"/>
    <property type="project" value="UniProtKB-UniRule"/>
</dbReference>
<dbReference type="GO" id="GO:0016992">
    <property type="term" value="F:lipoate synthase activity"/>
    <property type="evidence" value="ECO:0007669"/>
    <property type="project" value="UniProtKB-UniRule"/>
</dbReference>
<dbReference type="GO" id="GO:0046872">
    <property type="term" value="F:metal ion binding"/>
    <property type="evidence" value="ECO:0007669"/>
    <property type="project" value="UniProtKB-KW"/>
</dbReference>
<dbReference type="CDD" id="cd01335">
    <property type="entry name" value="Radical_SAM"/>
    <property type="match status" value="1"/>
</dbReference>
<dbReference type="FunFam" id="3.20.20.70:FF:000023">
    <property type="entry name" value="Lipoyl synthase"/>
    <property type="match status" value="1"/>
</dbReference>
<dbReference type="Gene3D" id="3.20.20.70">
    <property type="entry name" value="Aldolase class I"/>
    <property type="match status" value="1"/>
</dbReference>
<dbReference type="HAMAP" id="MF_00206">
    <property type="entry name" value="Lipoyl_synth"/>
    <property type="match status" value="1"/>
</dbReference>
<dbReference type="InterPro" id="IPR013785">
    <property type="entry name" value="Aldolase_TIM"/>
</dbReference>
<dbReference type="InterPro" id="IPR006638">
    <property type="entry name" value="Elp3/MiaA/NifB-like_rSAM"/>
</dbReference>
<dbReference type="InterPro" id="IPR031691">
    <property type="entry name" value="LIAS_N"/>
</dbReference>
<dbReference type="InterPro" id="IPR003698">
    <property type="entry name" value="Lipoyl_synth"/>
</dbReference>
<dbReference type="InterPro" id="IPR007197">
    <property type="entry name" value="rSAM"/>
</dbReference>
<dbReference type="NCBIfam" id="TIGR00510">
    <property type="entry name" value="lipA"/>
    <property type="match status" value="1"/>
</dbReference>
<dbReference type="NCBIfam" id="NF004019">
    <property type="entry name" value="PRK05481.1"/>
    <property type="match status" value="1"/>
</dbReference>
<dbReference type="NCBIfam" id="NF009544">
    <property type="entry name" value="PRK12928.1"/>
    <property type="match status" value="1"/>
</dbReference>
<dbReference type="PANTHER" id="PTHR10949">
    <property type="entry name" value="LIPOYL SYNTHASE"/>
    <property type="match status" value="1"/>
</dbReference>
<dbReference type="PANTHER" id="PTHR10949:SF0">
    <property type="entry name" value="LIPOYL SYNTHASE, MITOCHONDRIAL"/>
    <property type="match status" value="1"/>
</dbReference>
<dbReference type="Pfam" id="PF16881">
    <property type="entry name" value="LIAS_N"/>
    <property type="match status" value="1"/>
</dbReference>
<dbReference type="Pfam" id="PF04055">
    <property type="entry name" value="Radical_SAM"/>
    <property type="match status" value="1"/>
</dbReference>
<dbReference type="PIRSF" id="PIRSF005963">
    <property type="entry name" value="Lipoyl_synth"/>
    <property type="match status" value="1"/>
</dbReference>
<dbReference type="SFLD" id="SFLDF00271">
    <property type="entry name" value="lipoyl_synthase"/>
    <property type="match status" value="1"/>
</dbReference>
<dbReference type="SFLD" id="SFLDS00029">
    <property type="entry name" value="Radical_SAM"/>
    <property type="match status" value="1"/>
</dbReference>
<dbReference type="SMART" id="SM00729">
    <property type="entry name" value="Elp3"/>
    <property type="match status" value="1"/>
</dbReference>
<dbReference type="SUPFAM" id="SSF102114">
    <property type="entry name" value="Radical SAM enzymes"/>
    <property type="match status" value="1"/>
</dbReference>
<dbReference type="PROSITE" id="PS51918">
    <property type="entry name" value="RADICAL_SAM"/>
    <property type="match status" value="1"/>
</dbReference>
<name>LIPA_NEIG1</name>
<sequence length="327" mass="37047">MSEIKTDDPKRGIKLRGADKTARIPIKVVPLQEKLKKPEWIRAKLPSRKFFEIKDILREQKMHTVCEEASCPNIGECFSKGTATFMIMGDICTRRCPFCDVGHGRPNMLDPDEPKNLAESVKAMNLRYVVITSVDRDDLRDGGAQHFADCIKAIRETSPNTKIEILVPDFRGRLDIALKILAETPPDVMNHNLETHPSLYRKARPGANYQHSLDLLKRYKEMMPHIPTKSGIMVGLGETDEDVREIMRDMRAHNIEMITIGQYLQPSDGHLPVLRYVTPEQFKIFEKEAYELGFTNAAIGAMVRSSYHADEQAAEALRESHGGCGHH</sequence>
<accession>Q5F8I0</accession>
<keyword id="KW-0004">4Fe-4S</keyword>
<keyword id="KW-0963">Cytoplasm</keyword>
<keyword id="KW-0408">Iron</keyword>
<keyword id="KW-0411">Iron-sulfur</keyword>
<keyword id="KW-0479">Metal-binding</keyword>
<keyword id="KW-1185">Reference proteome</keyword>
<keyword id="KW-0949">S-adenosyl-L-methionine</keyword>
<keyword id="KW-0808">Transferase</keyword>
<gene>
    <name evidence="1" type="primary">lipA</name>
    <name type="ordered locus">NGO_0793</name>
</gene>
<proteinExistence type="inferred from homology"/>
<evidence type="ECO:0000255" key="1">
    <source>
        <dbReference type="HAMAP-Rule" id="MF_00206"/>
    </source>
</evidence>
<evidence type="ECO:0000255" key="2">
    <source>
        <dbReference type="PROSITE-ProRule" id="PRU01266"/>
    </source>
</evidence>
<comment type="function">
    <text evidence="1">Catalyzes the radical-mediated insertion of two sulfur atoms into the C-6 and C-8 positions of the octanoyl moiety bound to the lipoyl domains of lipoate-dependent enzymes, thereby converting the octanoylated domains into lipoylated derivatives.</text>
</comment>
<comment type="catalytic activity">
    <reaction evidence="1">
        <text>[[Fe-S] cluster scaffold protein carrying a second [4Fe-4S](2+) cluster] + N(6)-octanoyl-L-lysyl-[protein] + 2 oxidized [2Fe-2S]-[ferredoxin] + 2 S-adenosyl-L-methionine + 4 H(+) = [[Fe-S] cluster scaffold protein] + N(6)-[(R)-dihydrolipoyl]-L-lysyl-[protein] + 4 Fe(3+) + 2 hydrogen sulfide + 2 5'-deoxyadenosine + 2 L-methionine + 2 reduced [2Fe-2S]-[ferredoxin]</text>
        <dbReference type="Rhea" id="RHEA:16585"/>
        <dbReference type="Rhea" id="RHEA-COMP:9928"/>
        <dbReference type="Rhea" id="RHEA-COMP:10000"/>
        <dbReference type="Rhea" id="RHEA-COMP:10001"/>
        <dbReference type="Rhea" id="RHEA-COMP:10475"/>
        <dbReference type="Rhea" id="RHEA-COMP:14568"/>
        <dbReference type="Rhea" id="RHEA-COMP:14569"/>
        <dbReference type="ChEBI" id="CHEBI:15378"/>
        <dbReference type="ChEBI" id="CHEBI:17319"/>
        <dbReference type="ChEBI" id="CHEBI:29034"/>
        <dbReference type="ChEBI" id="CHEBI:29919"/>
        <dbReference type="ChEBI" id="CHEBI:33722"/>
        <dbReference type="ChEBI" id="CHEBI:33737"/>
        <dbReference type="ChEBI" id="CHEBI:33738"/>
        <dbReference type="ChEBI" id="CHEBI:57844"/>
        <dbReference type="ChEBI" id="CHEBI:59789"/>
        <dbReference type="ChEBI" id="CHEBI:78809"/>
        <dbReference type="ChEBI" id="CHEBI:83100"/>
        <dbReference type="EC" id="2.8.1.8"/>
    </reaction>
</comment>
<comment type="cofactor">
    <cofactor evidence="1">
        <name>[4Fe-4S] cluster</name>
        <dbReference type="ChEBI" id="CHEBI:49883"/>
    </cofactor>
    <text evidence="1">Binds 2 [4Fe-4S] clusters per subunit. One cluster is coordinated with 3 cysteines and an exchangeable S-adenosyl-L-methionine.</text>
</comment>
<comment type="pathway">
    <text evidence="1">Protein modification; protein lipoylation via endogenous pathway; protein N(6)-(lipoyl)lysine from octanoyl-[acyl-carrier-protein]: step 2/2.</text>
</comment>
<comment type="subcellular location">
    <subcellularLocation>
        <location evidence="1">Cytoplasm</location>
    </subcellularLocation>
</comment>
<comment type="similarity">
    <text evidence="1">Belongs to the radical SAM superfamily. Lipoyl synthase family.</text>
</comment>
<protein>
    <recommendedName>
        <fullName evidence="1">Lipoyl synthase</fullName>
        <ecNumber evidence="1">2.8.1.8</ecNumber>
    </recommendedName>
    <alternativeName>
        <fullName evidence="1">Lip-syn</fullName>
        <shortName evidence="1">LS</shortName>
    </alternativeName>
    <alternativeName>
        <fullName evidence="1">Lipoate synthase</fullName>
    </alternativeName>
    <alternativeName>
        <fullName evidence="1">Lipoic acid synthase</fullName>
    </alternativeName>
    <alternativeName>
        <fullName evidence="1">Sulfur insertion protein LipA</fullName>
    </alternativeName>
</protein>
<feature type="chain" id="PRO_1000012241" description="Lipoyl synthase">
    <location>
        <begin position="1"/>
        <end position="327"/>
    </location>
</feature>
<feature type="domain" description="Radical SAM core" evidence="2">
    <location>
        <begin position="78"/>
        <end position="295"/>
    </location>
</feature>
<feature type="binding site" evidence="1">
    <location>
        <position position="66"/>
    </location>
    <ligand>
        <name>[4Fe-4S] cluster</name>
        <dbReference type="ChEBI" id="CHEBI:49883"/>
        <label>1</label>
    </ligand>
</feature>
<feature type="binding site" evidence="1">
    <location>
        <position position="71"/>
    </location>
    <ligand>
        <name>[4Fe-4S] cluster</name>
        <dbReference type="ChEBI" id="CHEBI:49883"/>
        <label>1</label>
    </ligand>
</feature>
<feature type="binding site" evidence="1">
    <location>
        <position position="77"/>
    </location>
    <ligand>
        <name>[4Fe-4S] cluster</name>
        <dbReference type="ChEBI" id="CHEBI:49883"/>
        <label>1</label>
    </ligand>
</feature>
<feature type="binding site" evidence="1">
    <location>
        <position position="92"/>
    </location>
    <ligand>
        <name>[4Fe-4S] cluster</name>
        <dbReference type="ChEBI" id="CHEBI:49883"/>
        <label>2</label>
        <note>4Fe-4S-S-AdoMet</note>
    </ligand>
</feature>
<feature type="binding site" evidence="1">
    <location>
        <position position="96"/>
    </location>
    <ligand>
        <name>[4Fe-4S] cluster</name>
        <dbReference type="ChEBI" id="CHEBI:49883"/>
        <label>2</label>
        <note>4Fe-4S-S-AdoMet</note>
    </ligand>
</feature>
<feature type="binding site" evidence="1">
    <location>
        <position position="99"/>
    </location>
    <ligand>
        <name>[4Fe-4S] cluster</name>
        <dbReference type="ChEBI" id="CHEBI:49883"/>
        <label>2</label>
        <note>4Fe-4S-S-AdoMet</note>
    </ligand>
</feature>
<feature type="binding site" evidence="1">
    <location>
        <position position="306"/>
    </location>
    <ligand>
        <name>[4Fe-4S] cluster</name>
        <dbReference type="ChEBI" id="CHEBI:49883"/>
        <label>1</label>
    </ligand>
</feature>
<organism>
    <name type="scientific">Neisseria gonorrhoeae (strain ATCC 700825 / FA 1090)</name>
    <dbReference type="NCBI Taxonomy" id="242231"/>
    <lineage>
        <taxon>Bacteria</taxon>
        <taxon>Pseudomonadati</taxon>
        <taxon>Pseudomonadota</taxon>
        <taxon>Betaproteobacteria</taxon>
        <taxon>Neisseriales</taxon>
        <taxon>Neisseriaceae</taxon>
        <taxon>Neisseria</taxon>
    </lineage>
</organism>